<comment type="function">
    <text evidence="1">Functions in the biosynthesis of branched-chain amino acids. Catalyzes the dehydration of (2R,3R)-2,3-dihydroxy-3-methylpentanoate (2,3-dihydroxy-3-methylvalerate) into 2-oxo-3-methylpentanoate (2-oxo-3-methylvalerate) and of (2R)-2,3-dihydroxy-3-methylbutanoate (2,3-dihydroxyisovalerate) into 2-oxo-3-methylbutanoate (2-oxoisovalerate), the penultimate precursor to L-isoleucine and L-valine, respectively.</text>
</comment>
<comment type="catalytic activity">
    <reaction evidence="1">
        <text>(2R)-2,3-dihydroxy-3-methylbutanoate = 3-methyl-2-oxobutanoate + H2O</text>
        <dbReference type="Rhea" id="RHEA:24809"/>
        <dbReference type="ChEBI" id="CHEBI:11851"/>
        <dbReference type="ChEBI" id="CHEBI:15377"/>
        <dbReference type="ChEBI" id="CHEBI:49072"/>
        <dbReference type="EC" id="4.2.1.9"/>
    </reaction>
    <physiologicalReaction direction="left-to-right" evidence="1">
        <dbReference type="Rhea" id="RHEA:24810"/>
    </physiologicalReaction>
</comment>
<comment type="catalytic activity">
    <reaction evidence="1">
        <text>(2R,3R)-2,3-dihydroxy-3-methylpentanoate = (S)-3-methyl-2-oxopentanoate + H2O</text>
        <dbReference type="Rhea" id="RHEA:27694"/>
        <dbReference type="ChEBI" id="CHEBI:15377"/>
        <dbReference type="ChEBI" id="CHEBI:35146"/>
        <dbReference type="ChEBI" id="CHEBI:49258"/>
        <dbReference type="EC" id="4.2.1.9"/>
    </reaction>
    <physiologicalReaction direction="left-to-right" evidence="1">
        <dbReference type="Rhea" id="RHEA:27695"/>
    </physiologicalReaction>
</comment>
<comment type="cofactor">
    <cofactor evidence="1">
        <name>[2Fe-2S] cluster</name>
        <dbReference type="ChEBI" id="CHEBI:190135"/>
    </cofactor>
    <text evidence="1">Binds 1 [2Fe-2S] cluster per subunit. This cluster acts as a Lewis acid cofactor.</text>
</comment>
<comment type="cofactor">
    <cofactor evidence="1">
        <name>Mg(2+)</name>
        <dbReference type="ChEBI" id="CHEBI:18420"/>
    </cofactor>
</comment>
<comment type="pathway">
    <text evidence="1">Amino-acid biosynthesis; L-isoleucine biosynthesis; L-isoleucine from 2-oxobutanoate: step 3/4.</text>
</comment>
<comment type="pathway">
    <text evidence="1">Amino-acid biosynthesis; L-valine biosynthesis; L-valine from pyruvate: step 3/4.</text>
</comment>
<comment type="subunit">
    <text evidence="1">Homodimer.</text>
</comment>
<comment type="similarity">
    <text evidence="1">Belongs to the IlvD/Edd family.</text>
</comment>
<feature type="chain" id="PRO_0000103452" description="Dihydroxy-acid dehydratase">
    <location>
        <begin position="1"/>
        <end position="558"/>
    </location>
</feature>
<feature type="active site" description="Proton acceptor" evidence="1">
    <location>
        <position position="472"/>
    </location>
</feature>
<feature type="binding site" evidence="1">
    <location>
        <position position="78"/>
    </location>
    <ligand>
        <name>Mg(2+)</name>
        <dbReference type="ChEBI" id="CHEBI:18420"/>
    </ligand>
</feature>
<feature type="binding site" evidence="1">
    <location>
        <position position="119"/>
    </location>
    <ligand>
        <name>[2Fe-2S] cluster</name>
        <dbReference type="ChEBI" id="CHEBI:190135"/>
    </ligand>
</feature>
<feature type="binding site" evidence="1">
    <location>
        <position position="120"/>
    </location>
    <ligand>
        <name>Mg(2+)</name>
        <dbReference type="ChEBI" id="CHEBI:18420"/>
    </ligand>
</feature>
<feature type="binding site" description="via carbamate group" evidence="1">
    <location>
        <position position="121"/>
    </location>
    <ligand>
        <name>Mg(2+)</name>
        <dbReference type="ChEBI" id="CHEBI:18420"/>
    </ligand>
</feature>
<feature type="binding site" evidence="1">
    <location>
        <position position="192"/>
    </location>
    <ligand>
        <name>[2Fe-2S] cluster</name>
        <dbReference type="ChEBI" id="CHEBI:190135"/>
    </ligand>
</feature>
<feature type="binding site" evidence="1">
    <location>
        <position position="446"/>
    </location>
    <ligand>
        <name>Mg(2+)</name>
        <dbReference type="ChEBI" id="CHEBI:18420"/>
    </ligand>
</feature>
<feature type="modified residue" description="N6-carboxylysine" evidence="1">
    <location>
        <position position="121"/>
    </location>
</feature>
<sequence>MRSDAIKKGHLRAPNRSLLRACGLKDEDFDKPFIGVANSYIDIIPGHYFLNDYAKIIKDEIRKNGCVPFEFNTIGVDDGIAMGHEGMLYSLPSRELIANSIETVMNAHQLDALICIPNCDKITPGMLMGALRVNVPTIFVSGGPMASGVTKKGEKISLSSVFEAVGAYESKKISEEEFKDIECSACPSGGSCSGMFTANSMNTLCEAMGIALEGNGTILALSKEREELLRKAARRICEIALDERFKIRNIITQKAVRNAMVVDMAMGGSSNTVLHMLAISREAGVALDIKDLNFISSKVAHIAKIAPSLNSVYMDDIHKAGGVSAVMAEISSRQGHILELDALTITGESLKERLKNAKIKDENIIRKVDNAYSKVGGLAILFGNLAKQGCVIKTAGIIGERKFKGKAVCFNSQDEAIKGIIKGKVQKGNVCVIRYEGPKGGPGMQEMLSPTSLLMGMGLGADVALITDGRFSGATRGLSVGHISPEAAEGGLIGLLKDGDEIEIDVDAYTIHANVSEEEIAKRKKEFALPQKEVSSRWLRMYQKLVSNASKGAVLDME</sequence>
<evidence type="ECO:0000255" key="1">
    <source>
        <dbReference type="HAMAP-Rule" id="MF_00012"/>
    </source>
</evidence>
<proteinExistence type="inferred from homology"/>
<gene>
    <name evidence="1" type="primary">ilvD</name>
    <name type="ordered locus">Cj0013</name>
</gene>
<keyword id="KW-0001">2Fe-2S</keyword>
<keyword id="KW-0028">Amino-acid biosynthesis</keyword>
<keyword id="KW-0100">Branched-chain amino acid biosynthesis</keyword>
<keyword id="KW-0408">Iron</keyword>
<keyword id="KW-0411">Iron-sulfur</keyword>
<keyword id="KW-0456">Lyase</keyword>
<keyword id="KW-0460">Magnesium</keyword>
<keyword id="KW-0479">Metal-binding</keyword>
<keyword id="KW-1185">Reference proteome</keyword>
<reference key="1">
    <citation type="journal article" date="2000" name="Nature">
        <title>The genome sequence of the food-borne pathogen Campylobacter jejuni reveals hypervariable sequences.</title>
        <authorList>
            <person name="Parkhill J."/>
            <person name="Wren B.W."/>
            <person name="Mungall K.L."/>
            <person name="Ketley J.M."/>
            <person name="Churcher C.M."/>
            <person name="Basham D."/>
            <person name="Chillingworth T."/>
            <person name="Davies R.M."/>
            <person name="Feltwell T."/>
            <person name="Holroyd S."/>
            <person name="Jagels K."/>
            <person name="Karlyshev A.V."/>
            <person name="Moule S."/>
            <person name="Pallen M.J."/>
            <person name="Penn C.W."/>
            <person name="Quail M.A."/>
            <person name="Rajandream M.A."/>
            <person name="Rutherford K.M."/>
            <person name="van Vliet A.H.M."/>
            <person name="Whitehead S."/>
            <person name="Barrell B.G."/>
        </authorList>
    </citation>
    <scope>NUCLEOTIDE SEQUENCE [LARGE SCALE GENOMIC DNA]</scope>
    <source>
        <strain>ATCC 700819 / NCTC 11168</strain>
    </source>
</reference>
<accession>Q9PJ98</accession>
<accession>Q0PCB2</accession>
<organism>
    <name type="scientific">Campylobacter jejuni subsp. jejuni serotype O:2 (strain ATCC 700819 / NCTC 11168)</name>
    <dbReference type="NCBI Taxonomy" id="192222"/>
    <lineage>
        <taxon>Bacteria</taxon>
        <taxon>Pseudomonadati</taxon>
        <taxon>Campylobacterota</taxon>
        <taxon>Epsilonproteobacteria</taxon>
        <taxon>Campylobacterales</taxon>
        <taxon>Campylobacteraceae</taxon>
        <taxon>Campylobacter</taxon>
    </lineage>
</organism>
<dbReference type="EC" id="4.2.1.9" evidence="1"/>
<dbReference type="EMBL" id="AL111168">
    <property type="protein sequence ID" value="CAL34194.1"/>
    <property type="molecule type" value="Genomic_DNA"/>
</dbReference>
<dbReference type="PIR" id="H81416">
    <property type="entry name" value="H81416"/>
</dbReference>
<dbReference type="RefSeq" id="WP_002853088.1">
    <property type="nucleotide sequence ID" value="NZ_SZUC01000002.1"/>
</dbReference>
<dbReference type="RefSeq" id="YP_002343485.1">
    <property type="nucleotide sequence ID" value="NC_002163.1"/>
</dbReference>
<dbReference type="SMR" id="Q9PJ98"/>
<dbReference type="IntAct" id="Q9PJ98">
    <property type="interactions" value="7"/>
</dbReference>
<dbReference type="STRING" id="192222.Cj0013"/>
<dbReference type="PaxDb" id="192222-Cj0013"/>
<dbReference type="DNASU" id="904349"/>
<dbReference type="EnsemblBacteria" id="CAL34194">
    <property type="protein sequence ID" value="CAL34194"/>
    <property type="gene ID" value="Cj0013"/>
</dbReference>
<dbReference type="GeneID" id="904349"/>
<dbReference type="KEGG" id="cje:Cj0013"/>
<dbReference type="PATRIC" id="fig|192222.6.peg.13"/>
<dbReference type="eggNOG" id="COG0129">
    <property type="taxonomic scope" value="Bacteria"/>
</dbReference>
<dbReference type="HOGENOM" id="CLU_014271_4_2_7"/>
<dbReference type="OrthoDB" id="9807077at2"/>
<dbReference type="UniPathway" id="UPA00047">
    <property type="reaction ID" value="UER00057"/>
</dbReference>
<dbReference type="UniPathway" id="UPA00049">
    <property type="reaction ID" value="UER00061"/>
</dbReference>
<dbReference type="Proteomes" id="UP000000799">
    <property type="component" value="Chromosome"/>
</dbReference>
<dbReference type="GO" id="GO:0005829">
    <property type="term" value="C:cytosol"/>
    <property type="evidence" value="ECO:0007669"/>
    <property type="project" value="TreeGrafter"/>
</dbReference>
<dbReference type="GO" id="GO:0051537">
    <property type="term" value="F:2 iron, 2 sulfur cluster binding"/>
    <property type="evidence" value="ECO:0007669"/>
    <property type="project" value="UniProtKB-UniRule"/>
</dbReference>
<dbReference type="GO" id="GO:0004160">
    <property type="term" value="F:dihydroxy-acid dehydratase activity"/>
    <property type="evidence" value="ECO:0007669"/>
    <property type="project" value="UniProtKB-UniRule"/>
</dbReference>
<dbReference type="GO" id="GO:0000287">
    <property type="term" value="F:magnesium ion binding"/>
    <property type="evidence" value="ECO:0007669"/>
    <property type="project" value="UniProtKB-UniRule"/>
</dbReference>
<dbReference type="GO" id="GO:0009097">
    <property type="term" value="P:isoleucine biosynthetic process"/>
    <property type="evidence" value="ECO:0007669"/>
    <property type="project" value="UniProtKB-UniRule"/>
</dbReference>
<dbReference type="GO" id="GO:0009099">
    <property type="term" value="P:L-valine biosynthetic process"/>
    <property type="evidence" value="ECO:0007669"/>
    <property type="project" value="UniProtKB-UniRule"/>
</dbReference>
<dbReference type="FunFam" id="3.50.30.80:FF:000001">
    <property type="entry name" value="Dihydroxy-acid dehydratase"/>
    <property type="match status" value="1"/>
</dbReference>
<dbReference type="Gene3D" id="3.50.30.80">
    <property type="entry name" value="IlvD/EDD C-terminal domain-like"/>
    <property type="match status" value="1"/>
</dbReference>
<dbReference type="HAMAP" id="MF_00012">
    <property type="entry name" value="IlvD"/>
    <property type="match status" value="1"/>
</dbReference>
<dbReference type="InterPro" id="IPR042096">
    <property type="entry name" value="Dihydro-acid_dehy_C"/>
</dbReference>
<dbReference type="InterPro" id="IPR004404">
    <property type="entry name" value="DihydroxyA_deHydtase"/>
</dbReference>
<dbReference type="InterPro" id="IPR020558">
    <property type="entry name" value="DiOHA_6PGluconate_deHydtase_CS"/>
</dbReference>
<dbReference type="InterPro" id="IPR056740">
    <property type="entry name" value="ILV_EDD_C"/>
</dbReference>
<dbReference type="InterPro" id="IPR000581">
    <property type="entry name" value="ILV_EDD_N"/>
</dbReference>
<dbReference type="InterPro" id="IPR037237">
    <property type="entry name" value="IlvD/EDD_N"/>
</dbReference>
<dbReference type="NCBIfam" id="TIGR00110">
    <property type="entry name" value="ilvD"/>
    <property type="match status" value="1"/>
</dbReference>
<dbReference type="NCBIfam" id="NF002068">
    <property type="entry name" value="PRK00911.1"/>
    <property type="match status" value="1"/>
</dbReference>
<dbReference type="PANTHER" id="PTHR43661">
    <property type="entry name" value="D-XYLONATE DEHYDRATASE"/>
    <property type="match status" value="1"/>
</dbReference>
<dbReference type="PANTHER" id="PTHR43661:SF3">
    <property type="entry name" value="D-XYLONATE DEHYDRATASE YAGF-RELATED"/>
    <property type="match status" value="1"/>
</dbReference>
<dbReference type="Pfam" id="PF24877">
    <property type="entry name" value="ILV_EDD_C"/>
    <property type="match status" value="1"/>
</dbReference>
<dbReference type="Pfam" id="PF00920">
    <property type="entry name" value="ILVD_EDD_N"/>
    <property type="match status" value="1"/>
</dbReference>
<dbReference type="SUPFAM" id="SSF143975">
    <property type="entry name" value="IlvD/EDD N-terminal domain-like"/>
    <property type="match status" value="1"/>
</dbReference>
<dbReference type="SUPFAM" id="SSF52016">
    <property type="entry name" value="LeuD/IlvD-like"/>
    <property type="match status" value="1"/>
</dbReference>
<dbReference type="PROSITE" id="PS00886">
    <property type="entry name" value="ILVD_EDD_1"/>
    <property type="match status" value="1"/>
</dbReference>
<dbReference type="PROSITE" id="PS00887">
    <property type="entry name" value="ILVD_EDD_2"/>
    <property type="match status" value="1"/>
</dbReference>
<protein>
    <recommendedName>
        <fullName evidence="1">Dihydroxy-acid dehydratase</fullName>
        <shortName evidence="1">DAD</shortName>
        <ecNumber evidence="1">4.2.1.9</ecNumber>
    </recommendedName>
</protein>
<name>ILVD_CAMJE</name>